<organism>
    <name type="scientific">Homo sapiens</name>
    <name type="common">Human</name>
    <dbReference type="NCBI Taxonomy" id="9606"/>
    <lineage>
        <taxon>Eukaryota</taxon>
        <taxon>Metazoa</taxon>
        <taxon>Chordata</taxon>
        <taxon>Craniata</taxon>
        <taxon>Vertebrata</taxon>
        <taxon>Euteleostomi</taxon>
        <taxon>Mammalia</taxon>
        <taxon>Eutheria</taxon>
        <taxon>Euarchontoglires</taxon>
        <taxon>Primates</taxon>
        <taxon>Haplorrhini</taxon>
        <taxon>Catarrhini</taxon>
        <taxon>Hominidae</taxon>
        <taxon>Homo</taxon>
    </lineage>
</organism>
<accession>P13807</accession>
<accession>Q9BTT9</accession>
<dbReference type="EC" id="2.4.1.11" evidence="1 13"/>
<dbReference type="EMBL" id="J04501">
    <property type="protein sequence ID" value="AAA88046.1"/>
    <property type="molecule type" value="mRNA"/>
</dbReference>
<dbReference type="EMBL" id="Z33622">
    <property type="protein sequence ID" value="CAA83916.1"/>
    <property type="molecule type" value="Genomic_DNA"/>
</dbReference>
<dbReference type="EMBL" id="Z33623">
    <property type="protein sequence ID" value="CAA83916.1"/>
    <property type="status" value="JOINED"/>
    <property type="molecule type" value="Genomic_DNA"/>
</dbReference>
<dbReference type="EMBL" id="Z33609">
    <property type="protein sequence ID" value="CAA83916.1"/>
    <property type="status" value="JOINED"/>
    <property type="molecule type" value="Genomic_DNA"/>
</dbReference>
<dbReference type="EMBL" id="Z33624">
    <property type="protein sequence ID" value="CAA83916.1"/>
    <property type="status" value="JOINED"/>
    <property type="molecule type" value="Genomic_DNA"/>
</dbReference>
<dbReference type="EMBL" id="Z33625">
    <property type="protein sequence ID" value="CAA83916.1"/>
    <property type="status" value="JOINED"/>
    <property type="molecule type" value="Genomic_DNA"/>
</dbReference>
<dbReference type="EMBL" id="Z33626">
    <property type="protein sequence ID" value="CAA83916.1"/>
    <property type="status" value="JOINED"/>
    <property type="molecule type" value="Genomic_DNA"/>
</dbReference>
<dbReference type="EMBL" id="Z33610">
    <property type="protein sequence ID" value="CAA83916.1"/>
    <property type="status" value="JOINED"/>
    <property type="molecule type" value="Genomic_DNA"/>
</dbReference>
<dbReference type="EMBL" id="Z33627">
    <property type="protein sequence ID" value="CAA83916.1"/>
    <property type="status" value="JOINED"/>
    <property type="molecule type" value="Genomic_DNA"/>
</dbReference>
<dbReference type="EMBL" id="Z33628">
    <property type="protein sequence ID" value="CAA83916.1"/>
    <property type="status" value="JOINED"/>
    <property type="molecule type" value="Genomic_DNA"/>
</dbReference>
<dbReference type="EMBL" id="Z33629">
    <property type="protein sequence ID" value="CAA83916.1"/>
    <property type="status" value="JOINED"/>
    <property type="molecule type" value="Genomic_DNA"/>
</dbReference>
<dbReference type="EMBL" id="Z33630">
    <property type="protein sequence ID" value="CAA83916.1"/>
    <property type="status" value="JOINED"/>
    <property type="molecule type" value="Genomic_DNA"/>
</dbReference>
<dbReference type="EMBL" id="Z33631">
    <property type="protein sequence ID" value="CAA83916.1"/>
    <property type="status" value="JOINED"/>
    <property type="molecule type" value="Genomic_DNA"/>
</dbReference>
<dbReference type="EMBL" id="Z33633">
    <property type="protein sequence ID" value="CAA83916.1"/>
    <property type="status" value="JOINED"/>
    <property type="molecule type" value="Genomic_DNA"/>
</dbReference>
<dbReference type="EMBL" id="U32573">
    <property type="protein sequence ID" value="AAB60385.1"/>
    <property type="molecule type" value="mRNA"/>
</dbReference>
<dbReference type="EMBL" id="AC008687">
    <property type="status" value="NOT_ANNOTATED_CDS"/>
    <property type="molecule type" value="Genomic_DNA"/>
</dbReference>
<dbReference type="EMBL" id="AC026803">
    <property type="status" value="NOT_ANNOTATED_CDS"/>
    <property type="molecule type" value="Genomic_DNA"/>
</dbReference>
<dbReference type="EMBL" id="AC098792">
    <property type="status" value="NOT_ANNOTATED_CDS"/>
    <property type="molecule type" value="Genomic_DNA"/>
</dbReference>
<dbReference type="EMBL" id="CH471177">
    <property type="protein sequence ID" value="EAW52424.1"/>
    <property type="molecule type" value="Genomic_DNA"/>
</dbReference>
<dbReference type="EMBL" id="BC002617">
    <property type="protein sequence ID" value="AAH02617.1"/>
    <property type="molecule type" value="mRNA"/>
</dbReference>
<dbReference type="EMBL" id="BC003182">
    <property type="protein sequence ID" value="AAH03182.1"/>
    <property type="molecule type" value="mRNA"/>
</dbReference>
<dbReference type="EMBL" id="BC007688">
    <property type="protein sequence ID" value="AAH07688.1"/>
    <property type="molecule type" value="mRNA"/>
</dbReference>
<dbReference type="CCDS" id="CCDS12747.1">
    <molecule id="P13807-1"/>
</dbReference>
<dbReference type="CCDS" id="CCDS54292.1">
    <molecule id="P13807-2"/>
</dbReference>
<dbReference type="PIR" id="A32156">
    <property type="entry name" value="A32156"/>
</dbReference>
<dbReference type="RefSeq" id="NP_001155059.1">
    <molecule id="P13807-2"/>
    <property type="nucleotide sequence ID" value="NM_001161587.2"/>
</dbReference>
<dbReference type="RefSeq" id="NP_002094.2">
    <molecule id="P13807-1"/>
    <property type="nucleotide sequence ID" value="NM_002103.4"/>
</dbReference>
<dbReference type="PDB" id="7Q0B">
    <property type="method" value="EM"/>
    <property type="resolution" value="3.00 A"/>
    <property type="chains" value="A/B/C/D=1-737"/>
</dbReference>
<dbReference type="PDB" id="7Q0S">
    <property type="method" value="EM"/>
    <property type="resolution" value="4.00 A"/>
    <property type="chains" value="A/B/C/D=1-737"/>
</dbReference>
<dbReference type="PDB" id="7Q12">
    <property type="method" value="EM"/>
    <property type="resolution" value="3.70 A"/>
    <property type="chains" value="A/B/C/D=1-737"/>
</dbReference>
<dbReference type="PDB" id="7Q13">
    <property type="method" value="EM"/>
    <property type="resolution" value="3.00 A"/>
    <property type="chains" value="A/B/C/D=1-737"/>
</dbReference>
<dbReference type="PDB" id="7ZBN">
    <property type="method" value="EM"/>
    <property type="resolution" value="2.62 A"/>
    <property type="chains" value="A/B/C/D=1-737"/>
</dbReference>
<dbReference type="PDB" id="8CVX">
    <property type="method" value="EM"/>
    <property type="resolution" value="3.50 A"/>
    <property type="chains" value="A/B/C/D=1-634"/>
</dbReference>
<dbReference type="PDB" id="8CVY">
    <property type="method" value="EM"/>
    <property type="resolution" value="3.60 A"/>
    <property type="chains" value="A/B/C/D=1-634"/>
</dbReference>
<dbReference type="PDB" id="8CVZ">
    <property type="method" value="EM"/>
    <property type="resolution" value="3.52 A"/>
    <property type="chains" value="A/B/C/D=1-634"/>
</dbReference>
<dbReference type="PDBsum" id="7Q0B"/>
<dbReference type="PDBsum" id="7Q0S"/>
<dbReference type="PDBsum" id="7Q12"/>
<dbReference type="PDBsum" id="7Q13"/>
<dbReference type="PDBsum" id="7ZBN"/>
<dbReference type="PDBsum" id="8CVX"/>
<dbReference type="PDBsum" id="8CVY"/>
<dbReference type="PDBsum" id="8CVZ"/>
<dbReference type="EMDB" id="EMD-13743"/>
<dbReference type="EMDB" id="EMD-13751"/>
<dbReference type="EMDB" id="EMD-13752"/>
<dbReference type="EMDB" id="EMD-13753"/>
<dbReference type="EMDB" id="EMD-14587"/>
<dbReference type="EMDB" id="EMD-27020"/>
<dbReference type="EMDB" id="EMD-27021"/>
<dbReference type="EMDB" id="EMD-27022"/>
<dbReference type="SMR" id="P13807"/>
<dbReference type="BioGRID" id="109252">
    <property type="interactions" value="115"/>
</dbReference>
<dbReference type="FunCoup" id="P13807">
    <property type="interactions" value="2107"/>
</dbReference>
<dbReference type="IntAct" id="P13807">
    <property type="interactions" value="92"/>
</dbReference>
<dbReference type="MINT" id="P13807"/>
<dbReference type="STRING" id="9606.ENSP00000317904"/>
<dbReference type="BindingDB" id="P13807"/>
<dbReference type="ChEMBL" id="CHEMBL4000"/>
<dbReference type="CAZy" id="GT3">
    <property type="family name" value="Glycosyltransferase Family 3"/>
</dbReference>
<dbReference type="GlyGen" id="P13807">
    <property type="glycosylation" value="4 sites, 1 O-linked glycan (2 sites)"/>
</dbReference>
<dbReference type="iPTMnet" id="P13807"/>
<dbReference type="PhosphoSitePlus" id="P13807"/>
<dbReference type="SwissPalm" id="P13807"/>
<dbReference type="BioMuta" id="GYS1"/>
<dbReference type="DMDM" id="1351366"/>
<dbReference type="jPOST" id="P13807"/>
<dbReference type="MassIVE" id="P13807"/>
<dbReference type="PaxDb" id="9606-ENSP00000317904"/>
<dbReference type="PeptideAtlas" id="P13807"/>
<dbReference type="ProteomicsDB" id="52994">
    <molecule id="P13807-1"/>
</dbReference>
<dbReference type="ProteomicsDB" id="52995">
    <molecule id="P13807-2"/>
</dbReference>
<dbReference type="Pumba" id="P13807"/>
<dbReference type="Antibodypedia" id="3582">
    <property type="antibodies" value="422 antibodies from 41 providers"/>
</dbReference>
<dbReference type="DNASU" id="2997"/>
<dbReference type="Ensembl" id="ENST00000263276.6">
    <molecule id="P13807-2"/>
    <property type="protein sequence ID" value="ENSP00000263276.6"/>
    <property type="gene ID" value="ENSG00000104812.15"/>
</dbReference>
<dbReference type="Ensembl" id="ENST00000323798.8">
    <molecule id="P13807-1"/>
    <property type="protein sequence ID" value="ENSP00000317904.3"/>
    <property type="gene ID" value="ENSG00000104812.15"/>
</dbReference>
<dbReference type="GeneID" id="2997"/>
<dbReference type="KEGG" id="hsa:2997"/>
<dbReference type="MANE-Select" id="ENST00000323798.8">
    <property type="protein sequence ID" value="ENSP00000317904.3"/>
    <property type="RefSeq nucleotide sequence ID" value="NM_002103.5"/>
    <property type="RefSeq protein sequence ID" value="NP_002094.2"/>
</dbReference>
<dbReference type="UCSC" id="uc002plp.4">
    <molecule id="P13807-1"/>
    <property type="organism name" value="human"/>
</dbReference>
<dbReference type="AGR" id="HGNC:4706"/>
<dbReference type="CTD" id="2997"/>
<dbReference type="DisGeNET" id="2997"/>
<dbReference type="GeneCards" id="GYS1"/>
<dbReference type="HGNC" id="HGNC:4706">
    <property type="gene designation" value="GYS1"/>
</dbReference>
<dbReference type="HPA" id="ENSG00000104812">
    <property type="expression patterns" value="Group enriched (heart muscle, skeletal muscle, tongue)"/>
</dbReference>
<dbReference type="MalaCards" id="GYS1"/>
<dbReference type="MIM" id="138570">
    <property type="type" value="gene"/>
</dbReference>
<dbReference type="MIM" id="611556">
    <property type="type" value="phenotype"/>
</dbReference>
<dbReference type="neXtProt" id="NX_P13807"/>
<dbReference type="OpenTargets" id="ENSG00000104812"/>
<dbReference type="Orphanet" id="137625">
    <property type="disease" value="Glycogen storage disease due to muscle and heart glycogen synthase deficiency"/>
</dbReference>
<dbReference type="PharmGKB" id="PA29084"/>
<dbReference type="VEuPathDB" id="HostDB:ENSG00000104812"/>
<dbReference type="eggNOG" id="KOG3742">
    <property type="taxonomic scope" value="Eukaryota"/>
</dbReference>
<dbReference type="GeneTree" id="ENSGT00390000018612"/>
<dbReference type="HOGENOM" id="CLU_015910_1_0_1"/>
<dbReference type="InParanoid" id="P13807"/>
<dbReference type="OMA" id="RDVRNHI"/>
<dbReference type="OrthoDB" id="6335297at2759"/>
<dbReference type="PAN-GO" id="P13807">
    <property type="GO annotations" value="3 GO annotations based on evolutionary models"/>
</dbReference>
<dbReference type="PhylomeDB" id="P13807"/>
<dbReference type="TreeFam" id="TF300306"/>
<dbReference type="BioCyc" id="MetaCyc:HS02622-MONOMER"/>
<dbReference type="BRENDA" id="2.4.1.11">
    <property type="organism ID" value="2681"/>
</dbReference>
<dbReference type="PathwayCommons" id="P13807"/>
<dbReference type="Reactome" id="R-HSA-3322077">
    <property type="pathway name" value="Glycogen synthesis"/>
</dbReference>
<dbReference type="Reactome" id="R-HSA-3785653">
    <property type="pathway name" value="Myoclonic epilepsy of Lafora"/>
</dbReference>
<dbReference type="Reactome" id="R-HSA-3814836">
    <property type="pathway name" value="Glycogen storage disease type XV (GYG1)"/>
</dbReference>
<dbReference type="Reactome" id="R-HSA-3828062">
    <property type="pathway name" value="Glycogen storage disease type 0 (muscle GYS1)"/>
</dbReference>
<dbReference type="SignaLink" id="P13807"/>
<dbReference type="SIGNOR" id="P13807"/>
<dbReference type="UniPathway" id="UPA00164"/>
<dbReference type="BioGRID-ORCS" id="2997">
    <property type="hits" value="106 hits in 1157 CRISPR screens"/>
</dbReference>
<dbReference type="ChiTaRS" id="GYS1">
    <property type="organism name" value="human"/>
</dbReference>
<dbReference type="GenomeRNAi" id="2997"/>
<dbReference type="Pharos" id="P13807">
    <property type="development level" value="Tchem"/>
</dbReference>
<dbReference type="PRO" id="PR:P13807"/>
<dbReference type="Proteomes" id="UP000005640">
    <property type="component" value="Chromosome 19"/>
</dbReference>
<dbReference type="RNAct" id="P13807">
    <property type="molecule type" value="protein"/>
</dbReference>
<dbReference type="Bgee" id="ENSG00000104812">
    <property type="expression patterns" value="Expressed in hindlimb stylopod muscle and 167 other cell types or tissues"/>
</dbReference>
<dbReference type="ExpressionAtlas" id="P13807">
    <property type="expression patterns" value="baseline and differential"/>
</dbReference>
<dbReference type="GO" id="GO:0005737">
    <property type="term" value="C:cytoplasm"/>
    <property type="evidence" value="ECO:0000318"/>
    <property type="project" value="GO_Central"/>
</dbReference>
<dbReference type="GO" id="GO:0005829">
    <property type="term" value="C:cytosol"/>
    <property type="evidence" value="ECO:0000304"/>
    <property type="project" value="Reactome"/>
</dbReference>
<dbReference type="GO" id="GO:0016234">
    <property type="term" value="C:inclusion body"/>
    <property type="evidence" value="ECO:0007669"/>
    <property type="project" value="Ensembl"/>
</dbReference>
<dbReference type="GO" id="GO:0016020">
    <property type="term" value="C:membrane"/>
    <property type="evidence" value="ECO:0007005"/>
    <property type="project" value="UniProtKB"/>
</dbReference>
<dbReference type="GO" id="GO:0004373">
    <property type="term" value="F:alpha-1,4-glucan glucosyltransferase (UDP-glucose donor) activity"/>
    <property type="evidence" value="ECO:0000269"/>
    <property type="project" value="Reactome"/>
</dbReference>
<dbReference type="GO" id="GO:0005536">
    <property type="term" value="F:D-glucose binding"/>
    <property type="evidence" value="ECO:0007669"/>
    <property type="project" value="Ensembl"/>
</dbReference>
<dbReference type="GO" id="GO:0061547">
    <property type="term" value="F:glycogen synthase activity, transferring glucose-1-phosphate"/>
    <property type="evidence" value="ECO:0000269"/>
    <property type="project" value="Reactome"/>
</dbReference>
<dbReference type="GO" id="GO:0005978">
    <property type="term" value="P:glycogen biosynthetic process"/>
    <property type="evidence" value="ECO:0000318"/>
    <property type="project" value="GO_Central"/>
</dbReference>
<dbReference type="GO" id="GO:0007507">
    <property type="term" value="P:heart development"/>
    <property type="evidence" value="ECO:0007669"/>
    <property type="project" value="Ensembl"/>
</dbReference>
<dbReference type="CDD" id="cd03793">
    <property type="entry name" value="GT3_GSY2-like"/>
    <property type="match status" value="1"/>
</dbReference>
<dbReference type="FunFam" id="3.40.50.2000:FF:000014">
    <property type="entry name" value="Glycogen [starch] synthase"/>
    <property type="match status" value="1"/>
</dbReference>
<dbReference type="FunFam" id="3.40.50.2000:FF:000028">
    <property type="entry name" value="Glycogen [starch] synthase"/>
    <property type="match status" value="1"/>
</dbReference>
<dbReference type="Gene3D" id="3.40.50.2000">
    <property type="entry name" value="Glycogen Phosphorylase B"/>
    <property type="match status" value="2"/>
</dbReference>
<dbReference type="InterPro" id="IPR008631">
    <property type="entry name" value="Glycogen_synth"/>
</dbReference>
<dbReference type="PANTHER" id="PTHR10176:SF2">
    <property type="entry name" value="GLYCOGEN [STARCH] SYNTHASE, MUSCLE"/>
    <property type="match status" value="1"/>
</dbReference>
<dbReference type="PANTHER" id="PTHR10176">
    <property type="entry name" value="GLYCOGEN SYNTHASE"/>
    <property type="match status" value="1"/>
</dbReference>
<dbReference type="Pfam" id="PF05693">
    <property type="entry name" value="Glycogen_syn"/>
    <property type="match status" value="1"/>
</dbReference>
<dbReference type="SUPFAM" id="SSF53756">
    <property type="entry name" value="UDP-Glycosyltransferase/glycogen phosphorylase"/>
    <property type="match status" value="2"/>
</dbReference>
<feature type="chain" id="PRO_0000194763" description="Glycogen [starch] synthase, muscle">
    <location>
        <begin position="1"/>
        <end position="737"/>
    </location>
</feature>
<feature type="region of interest" description="Disordered" evidence="4">
    <location>
        <begin position="634"/>
        <end position="737"/>
    </location>
</feature>
<feature type="compositionally biased region" description="Acidic residues" evidence="4">
    <location>
        <begin position="658"/>
        <end position="681"/>
    </location>
</feature>
<feature type="compositionally biased region" description="Basic and acidic residues" evidence="4">
    <location>
        <begin position="682"/>
        <end position="695"/>
    </location>
</feature>
<feature type="compositionally biased region" description="Polar residues" evidence="4">
    <location>
        <begin position="698"/>
        <end position="714"/>
    </location>
</feature>
<feature type="compositionally biased region" description="Low complexity" evidence="4">
    <location>
        <begin position="715"/>
        <end position="737"/>
    </location>
</feature>
<feature type="binding site" evidence="8 21">
    <location>
        <position position="39"/>
    </location>
    <ligand>
        <name>UDP</name>
        <dbReference type="ChEBI" id="CHEBI:58223"/>
    </ligand>
</feature>
<feature type="binding site" evidence="13 21">
    <location>
        <position position="205"/>
    </location>
    <ligand>
        <name>UDP-alpha-D-glucose</name>
        <dbReference type="ChEBI" id="CHEBI:58885"/>
    </ligand>
</feature>
<feature type="binding site" evidence="13 21">
    <location>
        <position position="211"/>
    </location>
    <ligand>
        <name>UDP-alpha-D-glucose</name>
        <dbReference type="ChEBI" id="CHEBI:58885"/>
    </ligand>
</feature>
<feature type="binding site" description="in other chain" evidence="8 21">
    <location>
        <position position="291"/>
    </location>
    <ligand>
        <name>alpha-D-glucose 6-phosphate</name>
        <dbReference type="ChEBI" id="CHEBI:58225"/>
        <note>allosteric activator; ligand shared between two neighboring subunits</note>
    </ligand>
</feature>
<feature type="binding site" description="in other chain" evidence="8 21">
    <location>
        <position position="292"/>
    </location>
    <ligand>
        <name>alpha-D-glucose 6-phosphate</name>
        <dbReference type="ChEBI" id="CHEBI:58225"/>
        <note>allosteric activator; ligand shared between two neighboring subunits</note>
    </ligand>
</feature>
<feature type="binding site" evidence="8 20 21">
    <location>
        <position position="294"/>
    </location>
    <ligand>
        <name>alpha-D-glucose 6-phosphate</name>
        <dbReference type="ChEBI" id="CHEBI:58225"/>
        <note>allosteric activator; ligand shared between two neighboring subunits</note>
    </ligand>
</feature>
<feature type="binding site" evidence="8 21">
    <location>
        <position position="297"/>
    </location>
    <ligand>
        <name>alpha-D-glucose 6-phosphate</name>
        <dbReference type="ChEBI" id="CHEBI:58225"/>
        <note>allosteric activator; ligand shared between two neighboring subunits</note>
    </ligand>
</feature>
<feature type="binding site" evidence="8 21">
    <location>
        <position position="301"/>
    </location>
    <ligand>
        <name>alpha-D-glucose 6-phosphate</name>
        <dbReference type="ChEBI" id="CHEBI:58225"/>
        <note>allosteric activator; ligand shared between two neighboring subunits</note>
    </ligand>
</feature>
<feature type="binding site" evidence="8 21">
    <location>
        <position position="331"/>
    </location>
    <ligand>
        <name>UDP</name>
        <dbReference type="ChEBI" id="CHEBI:58223"/>
    </ligand>
</feature>
<feature type="binding site" evidence="13 21">
    <location>
        <position position="331"/>
    </location>
    <ligand>
        <name>UDP-alpha-D-glucose</name>
        <dbReference type="ChEBI" id="CHEBI:58885"/>
    </ligand>
</feature>
<feature type="binding site" evidence="8 20 21">
    <location>
        <position position="501"/>
    </location>
    <ligand>
        <name>alpha-D-glucose 6-phosphate</name>
        <dbReference type="ChEBI" id="CHEBI:58225"/>
        <note>allosteric activator; ligand shared between two neighboring subunits</note>
    </ligand>
</feature>
<feature type="binding site" evidence="13 21">
    <location>
        <position position="510"/>
    </location>
    <ligand>
        <name>UDP-alpha-D-glucose</name>
        <dbReference type="ChEBI" id="CHEBI:58885"/>
    </ligand>
</feature>
<feature type="binding site" evidence="13 21">
    <location>
        <position position="512"/>
    </location>
    <ligand>
        <name>UDP-alpha-D-glucose</name>
        <dbReference type="ChEBI" id="CHEBI:58885"/>
    </ligand>
</feature>
<feature type="binding site" evidence="13 21">
    <location>
        <position position="513"/>
    </location>
    <ligand>
        <name>UDP-alpha-D-glucose</name>
        <dbReference type="ChEBI" id="CHEBI:58885"/>
    </ligand>
</feature>
<feature type="binding site" evidence="8 21">
    <location>
        <position position="515"/>
    </location>
    <ligand>
        <name>UDP</name>
        <dbReference type="ChEBI" id="CHEBI:58223"/>
    </ligand>
</feature>
<feature type="binding site" evidence="8 20 21">
    <location>
        <position position="582"/>
    </location>
    <ligand>
        <name>alpha-D-glucose 6-phosphate</name>
        <dbReference type="ChEBI" id="CHEBI:58225"/>
        <note>allosteric activator; ligand shared between two neighboring subunits</note>
    </ligand>
</feature>
<feature type="binding site" evidence="8 20 21">
    <location>
        <position position="586"/>
    </location>
    <ligand>
        <name>alpha-D-glucose 6-phosphate</name>
        <dbReference type="ChEBI" id="CHEBI:58225"/>
        <note>allosteric activator; ligand shared between two neighboring subunits</note>
    </ligand>
</feature>
<feature type="modified residue" description="Phosphoserine; by AMPK and PKA" evidence="7">
    <location>
        <position position="8"/>
    </location>
</feature>
<feature type="modified residue" description="Phosphoserine" evidence="1">
    <location>
        <position position="11"/>
    </location>
</feature>
<feature type="modified residue" description="Phosphoserine" evidence="7 24 25">
    <location>
        <position position="412"/>
    </location>
</feature>
<feature type="modified residue" description="Phosphoserine" evidence="7 22">
    <location>
        <position position="641"/>
    </location>
</feature>
<feature type="modified residue" description="Phosphoserine" evidence="7 22">
    <location>
        <position position="645"/>
    </location>
</feature>
<feature type="modified residue" description="Phosphoserine" evidence="22">
    <location>
        <position position="649"/>
    </location>
</feature>
<feature type="modified residue" description="Phosphoserine" evidence="7">
    <location>
        <position position="652"/>
    </location>
</feature>
<feature type="modified residue" description="Phosphoserine; by GSK3-alpha and GSK3-beta" evidence="7">
    <location>
        <position position="653"/>
    </location>
</feature>
<feature type="modified residue" description="Phosphoserine; by CK2" evidence="7">
    <location>
        <position position="657"/>
    </location>
</feature>
<feature type="modified residue" description="Phosphoserine" evidence="1">
    <location>
        <position position="698"/>
    </location>
</feature>
<feature type="modified residue" description="Phosphothreonine" evidence="25">
    <location>
        <position position="700"/>
    </location>
</feature>
<feature type="modified residue" description="Phosphoserine" evidence="24">
    <location>
        <position position="710"/>
    </location>
</feature>
<feature type="modified residue" description="Phosphothreonine" evidence="3">
    <location>
        <position position="721"/>
    </location>
</feature>
<feature type="modified residue" description="Phosphoserine" evidence="7 23 24">
    <location>
        <position position="727"/>
    </location>
</feature>
<feature type="modified residue" description="Phosphoserine" evidence="7">
    <location>
        <position position="731"/>
    </location>
</feature>
<feature type="splice variant" id="VSP_042745" description="In isoform 2." evidence="10">
    <location>
        <begin position="101"/>
        <end position="164"/>
    </location>
</feature>
<feature type="sequence variant" id="VAR_037958" description="In dbSNP:rs5455.">
    <original>I</original>
    <variation>M</variation>
    <location>
        <position position="108"/>
    </location>
</feature>
<feature type="sequence variant" id="VAR_014727" description="In dbSNP:rs5456.">
    <original>K</original>
    <variation>E</variation>
    <location>
        <position position="130"/>
    </location>
</feature>
<feature type="sequence variant" id="VAR_014728" description="In dbSNP:rs5461.">
    <original>N</original>
    <variation>S</variation>
    <location>
        <position position="283"/>
    </location>
</feature>
<feature type="sequence variant" id="VAR_014729" description="In dbSNP:rs5465.">
    <original>E</original>
    <variation>G</variation>
    <location>
        <position position="359"/>
    </location>
</feature>
<feature type="sequence variant" id="VAR_014730" description="In dbSNP:rs5447.">
    <original>M</original>
    <variation>V</variation>
    <location>
        <position position="416"/>
    </location>
</feature>
<feature type="sequence variant" id="VAR_007859" description="In NIDDM; dbSNP:rs200862074." evidence="9">
    <original>G</original>
    <variation>S</variation>
    <location>
        <position position="464"/>
    </location>
</feature>
<feature type="sequence variant" id="VAR_014731" description="In dbSNP:rs5450.">
    <original>E</original>
    <variation>Q</variation>
    <location>
        <position position="619"/>
    </location>
</feature>
<feature type="sequence variant" id="VAR_014732" description="In dbSNP:rs5453.">
    <original>P</original>
    <variation>A</variation>
    <location>
        <position position="691"/>
    </location>
</feature>
<feature type="sequence conflict" description="In Ref. 1; AAA88046 and 3; AAB60385." evidence="11" ref="1 3">
    <original>T</original>
    <variation>I</variation>
    <location>
        <position position="136"/>
    </location>
</feature>
<feature type="sequence conflict" description="In Ref. 3; AAB60385." evidence="11" ref="3">
    <location>
        <position position="462"/>
    </location>
</feature>
<feature type="sequence conflict" description="In Ref. 3; AAB60385." evidence="11" ref="3">
    <original>A</original>
    <variation>D</variation>
    <location>
        <position position="608"/>
    </location>
</feature>
<feature type="sequence conflict" description="In Ref. 1; AAA88046 and 3; AAB60385." evidence="11" ref="1 3">
    <original>S</original>
    <variation>R</variation>
    <location>
        <position position="706"/>
    </location>
</feature>
<feature type="turn" evidence="28">
    <location>
        <begin position="16"/>
        <end position="21"/>
    </location>
</feature>
<feature type="strand" evidence="28">
    <location>
        <begin position="28"/>
        <end position="32"/>
    </location>
</feature>
<feature type="turn" evidence="28">
    <location>
        <begin position="34"/>
        <end position="37"/>
    </location>
</feature>
<feature type="strand" evidence="28">
    <location>
        <begin position="40"/>
        <end position="42"/>
    </location>
</feature>
<feature type="helix" evidence="28">
    <location>
        <begin position="43"/>
        <end position="58"/>
    </location>
</feature>
<feature type="strand" evidence="28">
    <location>
        <begin position="61"/>
        <end position="67"/>
    </location>
</feature>
<feature type="helix" evidence="28">
    <location>
        <begin position="70"/>
        <end position="75"/>
    </location>
</feature>
<feature type="strand" evidence="28">
    <location>
        <begin position="77"/>
        <end position="79"/>
    </location>
</feature>
<feature type="helix" evidence="28">
    <location>
        <begin position="85"/>
        <end position="96"/>
    </location>
</feature>
<feature type="strand" evidence="28">
    <location>
        <begin position="100"/>
        <end position="106"/>
    </location>
</feature>
<feature type="strand" evidence="26">
    <location>
        <begin position="108"/>
        <end position="110"/>
    </location>
</feature>
<feature type="strand" evidence="28">
    <location>
        <begin position="113"/>
        <end position="118"/>
    </location>
</feature>
<feature type="helix" evidence="28">
    <location>
        <begin position="120"/>
        <end position="125"/>
    </location>
</feature>
<feature type="helix" evidence="28">
    <location>
        <begin position="126"/>
        <end position="137"/>
    </location>
</feature>
<feature type="helix" evidence="28">
    <location>
        <begin position="146"/>
        <end position="167"/>
    </location>
</feature>
<feature type="turn" evidence="27">
    <location>
        <begin position="169"/>
        <end position="171"/>
    </location>
</feature>
<feature type="strand" evidence="28">
    <location>
        <begin position="175"/>
        <end position="179"/>
    </location>
</feature>
<feature type="helix" evidence="28">
    <location>
        <begin position="182"/>
        <end position="194"/>
    </location>
</feature>
<feature type="strand" evidence="28">
    <location>
        <begin position="197"/>
        <end position="206"/>
    </location>
</feature>
<feature type="helix" evidence="28">
    <location>
        <begin position="208"/>
        <end position="216"/>
    </location>
</feature>
<feature type="turn" evidence="29">
    <location>
        <begin position="218"/>
        <end position="226"/>
    </location>
</feature>
<feature type="helix" evidence="28">
    <location>
        <begin position="229"/>
        <end position="235"/>
    </location>
</feature>
<feature type="helix" evidence="28">
    <location>
        <begin position="239"/>
        <end position="250"/>
    </location>
</feature>
<feature type="strand" evidence="28">
    <location>
        <begin position="253"/>
        <end position="259"/>
    </location>
</feature>
<feature type="helix" evidence="28">
    <location>
        <begin position="260"/>
        <end position="269"/>
    </location>
</feature>
<feature type="strand" evidence="28">
    <location>
        <begin position="275"/>
        <end position="277"/>
    </location>
</feature>
<feature type="helix" evidence="28">
    <location>
        <begin position="284"/>
        <end position="286"/>
    </location>
</feature>
<feature type="helix" evidence="28">
    <location>
        <begin position="294"/>
        <end position="311"/>
    </location>
</feature>
<feature type="turn" evidence="28">
    <location>
        <begin position="312"/>
        <end position="314"/>
    </location>
</feature>
<feature type="strand" evidence="28">
    <location>
        <begin position="323"/>
        <end position="331"/>
    </location>
</feature>
<feature type="turn" evidence="28">
    <location>
        <begin position="334"/>
        <end position="338"/>
    </location>
</feature>
<feature type="helix" evidence="28">
    <location>
        <begin position="339"/>
        <end position="355"/>
    </location>
</feature>
<feature type="strand" evidence="28">
    <location>
        <begin position="361"/>
        <end position="367"/>
    </location>
</feature>
<feature type="strand" evidence="28">
    <location>
        <begin position="372"/>
        <end position="375"/>
    </location>
</feature>
<feature type="helix" evidence="28">
    <location>
        <begin position="377"/>
        <end position="409"/>
    </location>
</feature>
<feature type="helix" evidence="28">
    <location>
        <begin position="416"/>
        <end position="419"/>
    </location>
</feature>
<feature type="helix" evidence="28">
    <location>
        <begin position="422"/>
        <end position="435"/>
    </location>
</feature>
<feature type="strand" evidence="28">
    <location>
        <begin position="443"/>
        <end position="448"/>
    </location>
</feature>
<feature type="turn" evidence="28">
    <location>
        <begin position="449"/>
        <end position="453"/>
    </location>
</feature>
<feature type="helix" evidence="28">
    <location>
        <begin position="455"/>
        <end position="463"/>
    </location>
</feature>
<feature type="strand" evidence="28">
    <location>
        <begin position="472"/>
        <end position="477"/>
    </location>
</feature>
<feature type="strand" evidence="29">
    <location>
        <begin position="483"/>
        <end position="485"/>
    </location>
</feature>
<feature type="strand" evidence="29">
    <location>
        <begin position="487"/>
        <end position="490"/>
    </location>
</feature>
<feature type="helix" evidence="28">
    <location>
        <begin position="493"/>
        <end position="498"/>
    </location>
</feature>
<feature type="strand" evidence="28">
    <location>
        <begin position="501"/>
        <end position="504"/>
    </location>
</feature>
<feature type="strand" evidence="28">
    <location>
        <begin position="508"/>
        <end position="512"/>
    </location>
</feature>
<feature type="helix" evidence="28">
    <location>
        <begin position="514"/>
        <end position="521"/>
    </location>
</feature>
<feature type="strand" evidence="28">
    <location>
        <begin position="526"/>
        <end position="529"/>
    </location>
</feature>
<feature type="helix" evidence="28">
    <location>
        <begin position="533"/>
        <end position="541"/>
    </location>
</feature>
<feature type="strand" evidence="28">
    <location>
        <begin position="542"/>
        <end position="544"/>
    </location>
</feature>
<feature type="helix" evidence="28">
    <location>
        <begin position="545"/>
        <end position="548"/>
    </location>
</feature>
<feature type="strand" evidence="28">
    <location>
        <begin position="550"/>
        <end position="553"/>
    </location>
</feature>
<feature type="strand" evidence="28">
    <location>
        <begin position="556"/>
        <end position="558"/>
    </location>
</feature>
<feature type="helix" evidence="28">
    <location>
        <begin position="560"/>
        <end position="576"/>
    </location>
</feature>
<feature type="helix" evidence="28">
    <location>
        <begin position="579"/>
        <end position="591"/>
    </location>
</feature>
<feature type="helix" evidence="28">
    <location>
        <begin position="592"/>
        <end position="596"/>
    </location>
</feature>
<feature type="helix" evidence="28">
    <location>
        <begin position="598"/>
        <end position="616"/>
    </location>
</feature>
<feature type="turn" evidence="28">
    <location>
        <begin position="618"/>
        <end position="620"/>
    </location>
</feature>
<evidence type="ECO:0000250" key="1">
    <source>
        <dbReference type="UniProtKB" id="P13834"/>
    </source>
</evidence>
<evidence type="ECO:0000250" key="2">
    <source>
        <dbReference type="UniProtKB" id="P54840"/>
    </source>
</evidence>
<evidence type="ECO:0000250" key="3">
    <source>
        <dbReference type="UniProtKB" id="Q9Z1E4"/>
    </source>
</evidence>
<evidence type="ECO:0000256" key="4">
    <source>
        <dbReference type="SAM" id="MobiDB-lite"/>
    </source>
</evidence>
<evidence type="ECO:0000269" key="5">
    <source>
    </source>
</evidence>
<evidence type="ECO:0000269" key="6">
    <source>
    </source>
</evidence>
<evidence type="ECO:0000269" key="7">
    <source>
    </source>
</evidence>
<evidence type="ECO:0000269" key="8">
    <source>
    </source>
</evidence>
<evidence type="ECO:0000269" key="9">
    <source>
    </source>
</evidence>
<evidence type="ECO:0000303" key="10">
    <source>
    </source>
</evidence>
<evidence type="ECO:0000305" key="11"/>
<evidence type="ECO:0000305" key="12">
    <source>
    </source>
</evidence>
<evidence type="ECO:0000305" key="13">
    <source>
    </source>
</evidence>
<evidence type="ECO:0000312" key="14">
    <source>
        <dbReference type="HGNC" id="HGNC:4706"/>
    </source>
</evidence>
<evidence type="ECO:0000312" key="15">
    <source>
        <dbReference type="PDB" id="7Q0B"/>
    </source>
</evidence>
<evidence type="ECO:0000312" key="16">
    <source>
        <dbReference type="PDB" id="7Q0S"/>
    </source>
</evidence>
<evidence type="ECO:0000312" key="17">
    <source>
        <dbReference type="PDB" id="7Q12"/>
    </source>
</evidence>
<evidence type="ECO:0000312" key="18">
    <source>
        <dbReference type="PDB" id="7Q13"/>
    </source>
</evidence>
<evidence type="ECO:0000312" key="19">
    <source>
        <dbReference type="PDB" id="7ZBN"/>
    </source>
</evidence>
<evidence type="ECO:0007744" key="20">
    <source>
        <dbReference type="PDB" id="7Q12"/>
    </source>
</evidence>
<evidence type="ECO:0007744" key="21">
    <source>
        <dbReference type="PDB" id="7Q13"/>
    </source>
</evidence>
<evidence type="ECO:0007744" key="22">
    <source>
    </source>
</evidence>
<evidence type="ECO:0007744" key="23">
    <source>
    </source>
</evidence>
<evidence type="ECO:0007744" key="24">
    <source>
    </source>
</evidence>
<evidence type="ECO:0007744" key="25">
    <source>
    </source>
</evidence>
<evidence type="ECO:0007829" key="26">
    <source>
        <dbReference type="PDB" id="7Q0B"/>
    </source>
</evidence>
<evidence type="ECO:0007829" key="27">
    <source>
        <dbReference type="PDB" id="7Q13"/>
    </source>
</evidence>
<evidence type="ECO:0007829" key="28">
    <source>
        <dbReference type="PDB" id="7ZBN"/>
    </source>
</evidence>
<evidence type="ECO:0007829" key="29">
    <source>
        <dbReference type="PDB" id="8CVX"/>
    </source>
</evidence>
<protein>
    <recommendedName>
        <fullName evidence="11">Glycogen [starch] synthase, muscle</fullName>
        <ecNumber evidence="1 13">2.4.1.11</ecNumber>
    </recommendedName>
    <alternativeName>
        <fullName evidence="14">Glycogen synthase 1</fullName>
    </alternativeName>
</protein>
<reference key="1">
    <citation type="journal article" date="1989" name="Proc. Natl. Acad. Sci. U.S.A.">
        <title>Human muscle glycogen synthase cDNA sequence: a negatively charged protein with an asymmetric charge distribution.</title>
        <authorList>
            <person name="Browner M.F."/>
            <person name="Nakano K."/>
            <person name="Bang A.G."/>
            <person name="Fletterick R.J."/>
        </authorList>
    </citation>
    <scope>NUCLEOTIDE SEQUENCE [MRNA] (ISOFORM 1)</scope>
    <source>
        <tissue>Muscle</tissue>
    </source>
</reference>
<reference key="2">
    <citation type="journal article" date="1995" name="Diabetes">
        <title>Isolation and characterization of the human muscle glycogen synthase gene.</title>
        <authorList>
            <person name="Orho M."/>
            <person name="Nikula-Ijas P."/>
            <person name="Schalin-Jantti C."/>
            <person name="Permutt M.A."/>
            <person name="Groop L.C."/>
        </authorList>
    </citation>
    <scope>NUCLEOTIDE SEQUENCE [GENOMIC DNA]</scope>
    <scope>VARIANT NIDDM SER-464</scope>
</reference>
<reference key="3">
    <citation type="journal article" date="1996" name="J. Steroid Biochem. Mol. Biol.">
        <title>Cloning and characterization of a glycogen synthase cDNA from human endometrium.</title>
        <authorList>
            <person name="Su X."/>
            <person name="Schuler L."/>
            <person name="Shapiro S.S."/>
        </authorList>
    </citation>
    <scope>NUCLEOTIDE SEQUENCE [MRNA] (ISOFORM 1)</scope>
    <source>
        <tissue>Endometrium</tissue>
    </source>
</reference>
<reference key="4">
    <citation type="journal article" date="2004" name="Nature">
        <title>The DNA sequence and biology of human chromosome 19.</title>
        <authorList>
            <person name="Grimwood J."/>
            <person name="Gordon L.A."/>
            <person name="Olsen A.S."/>
            <person name="Terry A."/>
            <person name="Schmutz J."/>
            <person name="Lamerdin J.E."/>
            <person name="Hellsten U."/>
            <person name="Goodstein D."/>
            <person name="Couronne O."/>
            <person name="Tran-Gyamfi M."/>
            <person name="Aerts A."/>
            <person name="Altherr M."/>
            <person name="Ashworth L."/>
            <person name="Bajorek E."/>
            <person name="Black S."/>
            <person name="Branscomb E."/>
            <person name="Caenepeel S."/>
            <person name="Carrano A.V."/>
            <person name="Caoile C."/>
            <person name="Chan Y.M."/>
            <person name="Christensen M."/>
            <person name="Cleland C.A."/>
            <person name="Copeland A."/>
            <person name="Dalin E."/>
            <person name="Dehal P."/>
            <person name="Denys M."/>
            <person name="Detter J.C."/>
            <person name="Escobar J."/>
            <person name="Flowers D."/>
            <person name="Fotopulos D."/>
            <person name="Garcia C."/>
            <person name="Georgescu A.M."/>
            <person name="Glavina T."/>
            <person name="Gomez M."/>
            <person name="Gonzales E."/>
            <person name="Groza M."/>
            <person name="Hammon N."/>
            <person name="Hawkins T."/>
            <person name="Haydu L."/>
            <person name="Ho I."/>
            <person name="Huang W."/>
            <person name="Israni S."/>
            <person name="Jett J."/>
            <person name="Kadner K."/>
            <person name="Kimball H."/>
            <person name="Kobayashi A."/>
            <person name="Larionov V."/>
            <person name="Leem S.-H."/>
            <person name="Lopez F."/>
            <person name="Lou Y."/>
            <person name="Lowry S."/>
            <person name="Malfatti S."/>
            <person name="Martinez D."/>
            <person name="McCready P.M."/>
            <person name="Medina C."/>
            <person name="Morgan J."/>
            <person name="Nelson K."/>
            <person name="Nolan M."/>
            <person name="Ovcharenko I."/>
            <person name="Pitluck S."/>
            <person name="Pollard M."/>
            <person name="Popkie A.P."/>
            <person name="Predki P."/>
            <person name="Quan G."/>
            <person name="Ramirez L."/>
            <person name="Rash S."/>
            <person name="Retterer J."/>
            <person name="Rodriguez A."/>
            <person name="Rogers S."/>
            <person name="Salamov A."/>
            <person name="Salazar A."/>
            <person name="She X."/>
            <person name="Smith D."/>
            <person name="Slezak T."/>
            <person name="Solovyev V."/>
            <person name="Thayer N."/>
            <person name="Tice H."/>
            <person name="Tsai M."/>
            <person name="Ustaszewska A."/>
            <person name="Vo N."/>
            <person name="Wagner M."/>
            <person name="Wheeler J."/>
            <person name="Wu K."/>
            <person name="Xie G."/>
            <person name="Yang J."/>
            <person name="Dubchak I."/>
            <person name="Furey T.S."/>
            <person name="DeJong P."/>
            <person name="Dickson M."/>
            <person name="Gordon D."/>
            <person name="Eichler E.E."/>
            <person name="Pennacchio L.A."/>
            <person name="Richardson P."/>
            <person name="Stubbs L."/>
            <person name="Rokhsar D.S."/>
            <person name="Myers R.M."/>
            <person name="Rubin E.M."/>
            <person name="Lucas S.M."/>
        </authorList>
    </citation>
    <scope>NUCLEOTIDE SEQUENCE [LARGE SCALE GENOMIC DNA]</scope>
</reference>
<reference key="5">
    <citation type="submission" date="2005-07" db="EMBL/GenBank/DDBJ databases">
        <authorList>
            <person name="Mural R.J."/>
            <person name="Istrail S."/>
            <person name="Sutton G."/>
            <person name="Florea L."/>
            <person name="Halpern A.L."/>
            <person name="Mobarry C.M."/>
            <person name="Lippert R."/>
            <person name="Walenz B."/>
            <person name="Shatkay H."/>
            <person name="Dew I."/>
            <person name="Miller J.R."/>
            <person name="Flanigan M.J."/>
            <person name="Edwards N.J."/>
            <person name="Bolanos R."/>
            <person name="Fasulo D."/>
            <person name="Halldorsson B.V."/>
            <person name="Hannenhalli S."/>
            <person name="Turner R."/>
            <person name="Yooseph S."/>
            <person name="Lu F."/>
            <person name="Nusskern D.R."/>
            <person name="Shue B.C."/>
            <person name="Zheng X.H."/>
            <person name="Zhong F."/>
            <person name="Delcher A.L."/>
            <person name="Huson D.H."/>
            <person name="Kravitz S.A."/>
            <person name="Mouchard L."/>
            <person name="Reinert K."/>
            <person name="Remington K.A."/>
            <person name="Clark A.G."/>
            <person name="Waterman M.S."/>
            <person name="Eichler E.E."/>
            <person name="Adams M.D."/>
            <person name="Hunkapiller M.W."/>
            <person name="Myers E.W."/>
            <person name="Venter J.C."/>
        </authorList>
    </citation>
    <scope>NUCLEOTIDE SEQUENCE [LARGE SCALE GENOMIC DNA]</scope>
</reference>
<reference key="6">
    <citation type="journal article" date="2004" name="Genome Res.">
        <title>The status, quality, and expansion of the NIH full-length cDNA project: the Mammalian Gene Collection (MGC).</title>
        <authorList>
            <consortium name="The MGC Project Team"/>
        </authorList>
    </citation>
    <scope>NUCLEOTIDE SEQUENCE [LARGE SCALE MRNA] (ISOFORMS 1 AND 2)</scope>
    <source>
        <tissue>Kidney</tissue>
        <tissue>Lymph</tissue>
        <tissue>Skin</tissue>
    </source>
</reference>
<reference key="7">
    <citation type="journal article" date="2006" name="Arch. Biochem. Biophys.">
        <title>Interaction between glycogenin and glycogen synthase.</title>
        <authorList>
            <person name="Skurat A.V."/>
            <person name="Dietrich A.D."/>
            <person name="Roach P.J."/>
        </authorList>
    </citation>
    <scope>INTERACTION WITH GYG1</scope>
</reference>
<reference key="8">
    <citation type="journal article" date="2007" name="N. Engl. J. Med.">
        <title>Cardiomyopathy and exercise intolerance in muscle glycogen storage disease 0.</title>
        <authorList>
            <person name="Kollberg G."/>
            <person name="Tulinius M."/>
            <person name="Gilljam T."/>
            <person name="Oestman-Smith I."/>
            <person name="Forsander G."/>
            <person name="Jotorp P."/>
            <person name="Oldfors A."/>
            <person name="Holme E."/>
        </authorList>
    </citation>
    <scope>INVOLVEMENT IN GSD0B</scope>
</reference>
<reference key="9">
    <citation type="journal article" date="2008" name="Mol. Cell">
        <title>Kinase-selective enrichment enables quantitative phosphoproteomics of the kinome across the cell cycle.</title>
        <authorList>
            <person name="Daub H."/>
            <person name="Olsen J.V."/>
            <person name="Bairlein M."/>
            <person name="Gnad F."/>
            <person name="Oppermann F.S."/>
            <person name="Korner R."/>
            <person name="Greff Z."/>
            <person name="Keri G."/>
            <person name="Stemmann O."/>
            <person name="Mann M."/>
        </authorList>
    </citation>
    <scope>IDENTIFICATION BY MASS SPECTROMETRY [LARGE SCALE ANALYSIS]</scope>
    <source>
        <tissue>Cervix carcinoma</tissue>
    </source>
</reference>
<reference key="10">
    <citation type="journal article" date="2008" name="Proc. Natl. Acad. Sci. U.S.A.">
        <title>A quantitative atlas of mitotic phosphorylation.</title>
        <authorList>
            <person name="Dephoure N."/>
            <person name="Zhou C."/>
            <person name="Villen J."/>
            <person name="Beausoleil S.A."/>
            <person name="Bakalarski C.E."/>
            <person name="Elledge S.J."/>
            <person name="Gygi S.P."/>
        </authorList>
    </citation>
    <scope>PHOSPHORYLATION [LARGE SCALE ANALYSIS] AT SER-641; SER-645 AND SER-649</scope>
    <scope>IDENTIFICATION BY MASS SPECTROMETRY [LARGE SCALE ANALYSIS]</scope>
    <source>
        <tissue>Cervix carcinoma</tissue>
    </source>
</reference>
<reference key="11">
    <citation type="journal article" date="2009" name="Anal. Chem.">
        <title>Lys-N and trypsin cover complementary parts of the phosphoproteome in a refined SCX-based approach.</title>
        <authorList>
            <person name="Gauci S."/>
            <person name="Helbig A.O."/>
            <person name="Slijper M."/>
            <person name="Krijgsveld J."/>
            <person name="Heck A.J."/>
            <person name="Mohammed S."/>
        </authorList>
    </citation>
    <scope>IDENTIFICATION BY MASS SPECTROMETRY [LARGE SCALE ANALYSIS]</scope>
</reference>
<reference key="12">
    <citation type="journal article" date="2009" name="Sci. Signal.">
        <title>Quantitative phosphoproteomic analysis of T cell receptor signaling reveals system-wide modulation of protein-protein interactions.</title>
        <authorList>
            <person name="Mayya V."/>
            <person name="Lundgren D.H."/>
            <person name="Hwang S.-I."/>
            <person name="Rezaul K."/>
            <person name="Wu L."/>
            <person name="Eng J.K."/>
            <person name="Rodionov V."/>
            <person name="Han D.K."/>
        </authorList>
    </citation>
    <scope>PHOSPHORYLATION [LARGE SCALE ANALYSIS] AT SER-727</scope>
    <scope>IDENTIFICATION BY MASS SPECTROMETRY [LARGE SCALE ANALYSIS]</scope>
    <source>
        <tissue>Leukemic T-cell</tissue>
    </source>
</reference>
<reference key="13">
    <citation type="journal article" date="2011" name="BMC Syst. Biol.">
        <title>Initial characterization of the human central proteome.</title>
        <authorList>
            <person name="Burkard T.R."/>
            <person name="Planyavsky M."/>
            <person name="Kaupe I."/>
            <person name="Breitwieser F.P."/>
            <person name="Buerckstuemmer T."/>
            <person name="Bennett K.L."/>
            <person name="Superti-Furga G."/>
            <person name="Colinge J."/>
        </authorList>
    </citation>
    <scope>IDENTIFICATION BY MASS SPECTROMETRY [LARGE SCALE ANALYSIS]</scope>
</reference>
<reference key="14">
    <citation type="journal article" date="2011" name="J. Neurochem.">
        <title>R3F, a novel membrane-associated glycogen targeting subunit of protein phosphatase 1 regulates glycogen synthase in astrocytoma cells in response to glucose and extracellular signals.</title>
        <authorList>
            <person name="Kelsall I.R."/>
            <person name="Voss M."/>
            <person name="Munro S."/>
            <person name="Cuthbertson D.J."/>
            <person name="Cohen P.T."/>
        </authorList>
    </citation>
    <scope>DEPHOSPHORYLATION AT SER-641 AND SER-645 BY PP1</scope>
</reference>
<reference key="15">
    <citation type="journal article" date="2011" name="Sci. Signal.">
        <title>System-wide temporal characterization of the proteome and phosphoproteome of human embryonic stem cell differentiation.</title>
        <authorList>
            <person name="Rigbolt K.T."/>
            <person name="Prokhorova T.A."/>
            <person name="Akimov V."/>
            <person name="Henningsen J."/>
            <person name="Johansen P.T."/>
            <person name="Kratchmarova I."/>
            <person name="Kassem M."/>
            <person name="Mann M."/>
            <person name="Olsen J.V."/>
            <person name="Blagoev B."/>
        </authorList>
    </citation>
    <scope>IDENTIFICATION BY MASS SPECTROMETRY [LARGE SCALE ANALYSIS]</scope>
</reference>
<reference key="16">
    <citation type="journal article" date="2013" name="J. Proteome Res.">
        <title>Toward a comprehensive characterization of a human cancer cell phosphoproteome.</title>
        <authorList>
            <person name="Zhou H."/>
            <person name="Di Palma S."/>
            <person name="Preisinger C."/>
            <person name="Peng M."/>
            <person name="Polat A.N."/>
            <person name="Heck A.J."/>
            <person name="Mohammed S."/>
        </authorList>
    </citation>
    <scope>PHOSPHORYLATION [LARGE SCALE ANALYSIS] AT SER-412; SER-710 AND SER-727</scope>
    <scope>IDENTIFICATION BY MASS SPECTROMETRY [LARGE SCALE ANALYSIS]</scope>
    <source>
        <tissue>Erythroleukemia</tissue>
    </source>
</reference>
<reference key="17">
    <citation type="journal article" date="2014" name="J. Proteomics">
        <title>An enzyme assisted RP-RPLC approach for in-depth analysis of human liver phosphoproteome.</title>
        <authorList>
            <person name="Bian Y."/>
            <person name="Song C."/>
            <person name="Cheng K."/>
            <person name="Dong M."/>
            <person name="Wang F."/>
            <person name="Huang J."/>
            <person name="Sun D."/>
            <person name="Wang L."/>
            <person name="Ye M."/>
            <person name="Zou H."/>
        </authorList>
    </citation>
    <scope>PHOSPHORYLATION [LARGE SCALE ANALYSIS] AT SER-412 AND THR-700</scope>
    <scope>IDENTIFICATION BY MASS SPECTROMETRY [LARGE SCALE ANALYSIS]</scope>
    <source>
        <tissue>Liver</tissue>
    </source>
</reference>
<reference evidence="19" key="18">
    <citation type="journal article" date="2022" name="Nat. Commun.">
        <title>Mechanism of glycogen synthase inactivation and interaction with glycogenin.</title>
        <authorList>
            <person name="Marr L."/>
            <person name="Biswas D."/>
            <person name="Daly L.A."/>
            <person name="Browning C."/>
            <person name="Vial S.C.M."/>
            <person name="Maskell D.P."/>
            <person name="Hudson C."/>
            <person name="Bertrand J.A."/>
            <person name="Pollard J."/>
            <person name="Ranson N.A."/>
            <person name="Khatter H."/>
            <person name="Eyers C.E."/>
            <person name="Sakamoto K."/>
            <person name="Zeqiraj E."/>
        </authorList>
    </citation>
    <scope>STRUCTURE BY ELECTRON MICROSCOPY (2.62 ANGSTROMS) IN COMPLEX WITH GYG1</scope>
    <scope>ACTIVITY REGULATION</scope>
    <scope>SUBUNIT</scope>
    <scope>PHOSPHORYLATION AT SER-8; SER-412; SER-641; SER-645; SER-652; SER-653; SER-657; SER-727 AND SER-731</scope>
</reference>
<reference evidence="15 16 17 18" key="19">
    <citation type="journal article" date="2022" name="Nat. Struct. Mol. Biol.">
        <title>Molecular basis for the regulation of human glycogen synthase by phosphorylation and glucose-6-phosphate.</title>
        <authorList>
            <person name="McCorvie T.J."/>
            <person name="Loria P.M."/>
            <person name="Tu M."/>
            <person name="Han S."/>
            <person name="Shrestha L."/>
            <person name="Froese D.S."/>
            <person name="Ferreira I.M."/>
            <person name="Berg A.P."/>
            <person name="Yue W.W."/>
        </authorList>
    </citation>
    <scope>STRUCTURE BY ELECTRON MICROSCOPY (3.0 ANGSTROMS) IN COMPLEX WITH GYG1; UDP; ALPHA-D-GLUCOSE AND GLUCOSE-6-PHOSPHATE</scope>
    <scope>FUNCTION</scope>
    <scope>CATALYTIC ACTIVITY</scope>
    <scope>ACTIVITY REGULATION</scope>
    <scope>PATHWAY</scope>
    <scope>SUBUNIT</scope>
</reference>
<proteinExistence type="evidence at protein level"/>
<name>GYS1_HUMAN</name>
<comment type="function">
    <text evidence="8">Glycogen synthase participates in the glycogen biosynthetic process along with glycogenin and glycogen branching enzyme. Extends the primer composed of a few glucose units formed by glycogenin by adding new glucose units to it. In this context, glycogen synthase transfers the glycosyl residue from UDP-Glc to the non-reducing end of alpha-1,4-glucan.</text>
</comment>
<comment type="catalytic activity">
    <reaction evidence="8">
        <text>[(1-&gt;4)-alpha-D-glucosyl](n) + UDP-alpha-D-glucose = [(1-&gt;4)-alpha-D-glucosyl](n+1) + UDP + H(+)</text>
        <dbReference type="Rhea" id="RHEA:18549"/>
        <dbReference type="Rhea" id="RHEA-COMP:9584"/>
        <dbReference type="Rhea" id="RHEA-COMP:9587"/>
        <dbReference type="ChEBI" id="CHEBI:15378"/>
        <dbReference type="ChEBI" id="CHEBI:15444"/>
        <dbReference type="ChEBI" id="CHEBI:58223"/>
        <dbReference type="ChEBI" id="CHEBI:58885"/>
        <dbReference type="EC" id="2.4.1.11"/>
    </reaction>
    <physiologicalReaction direction="left-to-right" evidence="8">
        <dbReference type="Rhea" id="RHEA:18550"/>
    </physiologicalReaction>
</comment>
<comment type="activity regulation">
    <text evidence="1 2 7 8">Allosteric activation by glucose-6-phosphate (PubMed:35690592, PubMed:35835870). Phosphorylation reduces enzyme activity by constraining a tense conformation of the tetramer through inter-subunit interaction (PubMed:35690592, PubMed:35835870). Phosphorylation reduces the activity towards UDP-glucose (By similarity). When in the non-phosphorylated state, glycogen synthase does not require glucose-6-phosphate as an allosteric activator; when phosphorylated it does (By similarity).</text>
</comment>
<comment type="pathway">
    <text evidence="8">Glycan biosynthesis; glycogen biosynthesis.</text>
</comment>
<comment type="subunit">
    <text evidence="5 7 8">Part of the GYS1-GYG1 complex, a heterooctamer composed of a tetramer of GYS1 and 2 dimers of GYG1, where each GYS1 protomer binds to one GYG1 subunit (via GYG1 C-terminus); the GYS1 tetramer may dissociate from GYG1 dimers to continue glycogen polymerization on its own.</text>
</comment>
<comment type="interaction">
    <interactant intactId="EBI-740553">
        <id>P13807</id>
    </interactant>
    <interactant intactId="EBI-745226">
        <id>Q13155</id>
        <label>AIMP2</label>
    </interactant>
    <organismsDiffer>false</organismsDiffer>
    <experiments>3</experiments>
</comment>
<comment type="interaction">
    <interactant intactId="EBI-740553">
        <id>P13807</id>
    </interactant>
    <interactant intactId="EBI-10181188">
        <id>Q8N7W2-2</id>
        <label>BEND7</label>
    </interactant>
    <organismsDiffer>false</organismsDiffer>
    <experiments>3</experiments>
</comment>
<comment type="interaction">
    <interactant intactId="EBI-740553">
        <id>P13807</id>
    </interactant>
    <interactant intactId="EBI-979174">
        <id>Q53HL2</id>
        <label>CDCA8</label>
    </interactant>
    <organismsDiffer>false</organismsDiffer>
    <experiments>3</experiments>
</comment>
<comment type="interaction">
    <interactant intactId="EBI-740553">
        <id>P13807</id>
    </interactant>
    <interactant intactId="EBI-12357161">
        <id>Q5SYC1</id>
        <label>CLVS2</label>
    </interactant>
    <organismsDiffer>false</organismsDiffer>
    <experiments>3</experiments>
</comment>
<comment type="interaction">
    <interactant intactId="EBI-740553">
        <id>P13807</id>
    </interactant>
    <interactant intactId="EBI-748171">
        <id>O43186</id>
        <label>CRX</label>
    </interactant>
    <organismsDiffer>false</organismsDiffer>
    <experiments>3</experiments>
</comment>
<comment type="interaction">
    <interactant intactId="EBI-740553">
        <id>P13807</id>
    </interactant>
    <interactant intactId="EBI-2349927">
        <id>Q5JST6</id>
        <label>EFHC2</label>
    </interactant>
    <organismsDiffer>false</organismsDiffer>
    <experiments>3</experiments>
</comment>
<comment type="interaction">
    <interactant intactId="EBI-740553">
        <id>P13807</id>
    </interactant>
    <interactant intactId="EBI-12958227">
        <id>Q86W67</id>
        <label>FAM228A</label>
    </interactant>
    <organismsDiffer>false</organismsDiffer>
    <experiments>3</experiments>
</comment>
<comment type="interaction">
    <interactant intactId="EBI-740553">
        <id>P13807</id>
    </interactant>
    <interactant intactId="EBI-373586">
        <id>P49841</id>
        <label>GSK3B</label>
    </interactant>
    <organismsDiffer>false</organismsDiffer>
    <experiments>4</experiments>
</comment>
<comment type="interaction">
    <interactant intactId="EBI-740553">
        <id>P13807</id>
    </interactant>
    <interactant intactId="EBI-740533">
        <id>P46976</id>
        <label>GYG1</label>
    </interactant>
    <organismsDiffer>false</organismsDiffer>
    <experiments>9</experiments>
</comment>
<comment type="interaction">
    <interactant intactId="EBI-740553">
        <id>P13807</id>
    </interactant>
    <interactant intactId="EBI-12017394">
        <id>P46976-2</id>
        <label>GYG1</label>
    </interactant>
    <organismsDiffer>false</organismsDiffer>
    <experiments>3</experiments>
</comment>
<comment type="interaction">
    <interactant intactId="EBI-740553">
        <id>P13807</id>
    </interactant>
    <interactant intactId="EBI-752192">
        <id>O15488</id>
        <label>GYG2</label>
    </interactant>
    <organismsDiffer>false</organismsDiffer>
    <experiments>6</experiments>
</comment>
<comment type="interaction">
    <interactant intactId="EBI-740553">
        <id>P13807</id>
    </interactant>
    <interactant intactId="EBI-741308">
        <id>P17509</id>
        <label>HOXB6</label>
    </interactant>
    <organismsDiffer>false</organismsDiffer>
    <experiments>3</experiments>
</comment>
<comment type="interaction">
    <interactant intactId="EBI-740553">
        <id>P13807</id>
    </interactant>
    <interactant intactId="EBI-1752118">
        <id>P31273</id>
        <label>HOXC8</label>
    </interactant>
    <organismsDiffer>false</organismsDiffer>
    <experiments>3</experiments>
</comment>
<comment type="interaction">
    <interactant intactId="EBI-740553">
        <id>P13807</id>
    </interactant>
    <interactant intactId="EBI-8638439">
        <id>Q8IYA8</id>
        <label>IHO1</label>
    </interactant>
    <organismsDiffer>false</organismsDiffer>
    <experiments>6</experiments>
</comment>
<comment type="interaction">
    <interactant intactId="EBI-740553">
        <id>P13807</id>
    </interactant>
    <interactant intactId="EBI-6509505">
        <id>Q0VD86</id>
        <label>INCA1</label>
    </interactant>
    <organismsDiffer>false</organismsDiffer>
    <experiments>3</experiments>
</comment>
<comment type="interaction">
    <interactant intactId="EBI-740553">
        <id>P13807</id>
    </interactant>
    <interactant intactId="EBI-715394">
        <id>Q9H079</id>
        <label>KATNBL1</label>
    </interactant>
    <organismsDiffer>false</organismsDiffer>
    <experiments>5</experiments>
</comment>
<comment type="interaction">
    <interactant intactId="EBI-740553">
        <id>P13807</id>
    </interactant>
    <interactant intactId="EBI-8284732">
        <id>Q13351</id>
        <label>KLF1</label>
    </interactant>
    <organismsDiffer>false</organismsDiffer>
    <experiments>3</experiments>
</comment>
<comment type="interaction">
    <interactant intactId="EBI-740553">
        <id>P13807</id>
    </interactant>
    <interactant intactId="EBI-7232405">
        <id>O43474</id>
        <label>KLF4</label>
    </interactant>
    <organismsDiffer>false</organismsDiffer>
    <experiments>5</experiments>
</comment>
<comment type="interaction">
    <interactant intactId="EBI-740553">
        <id>P13807</id>
    </interactant>
    <interactant intactId="EBI-2864512">
        <id>P50221</id>
        <label>MEOX1</label>
    </interactant>
    <organismsDiffer>false</organismsDiffer>
    <experiments>3</experiments>
</comment>
<comment type="interaction">
    <interactant intactId="EBI-740553">
        <id>P13807</id>
    </interactant>
    <interactant intactId="EBI-1246238">
        <id>P17568</id>
        <label>NDUFB7</label>
    </interactant>
    <organismsDiffer>false</organismsDiffer>
    <experiments>3</experiments>
</comment>
<comment type="interaction">
    <interactant intactId="EBI-740553">
        <id>P13807</id>
    </interactant>
    <interactant intactId="EBI-2563309">
        <id>P49585</id>
        <label>PCYT1A</label>
    </interactant>
    <organismsDiffer>false</organismsDiffer>
    <experiments>3</experiments>
</comment>
<comment type="interaction">
    <interactant intactId="EBI-740553">
        <id>P13807</id>
    </interactant>
    <interactant intactId="EBI-721782">
        <id>Q96BK5</id>
        <label>PINX1</label>
    </interactant>
    <organismsDiffer>false</organismsDiffer>
    <experiments>3</experiments>
</comment>
<comment type="interaction">
    <interactant intactId="EBI-740553">
        <id>P13807</id>
    </interactant>
    <interactant intactId="EBI-2876622">
        <id>Q9UPG8</id>
        <label>PLAGL2</label>
    </interactant>
    <organismsDiffer>false</organismsDiffer>
    <experiments>3</experiments>
</comment>
<comment type="interaction">
    <interactant intactId="EBI-740553">
        <id>P13807</id>
    </interactant>
    <interactant intactId="EBI-10171633">
        <id>Q96PV4</id>
        <label>PNMA5</label>
    </interactant>
    <organismsDiffer>false</organismsDiffer>
    <experiments>3</experiments>
</comment>
<comment type="interaction">
    <interactant intactId="EBI-740553">
        <id>P13807</id>
    </interactant>
    <interactant intactId="EBI-2506727">
        <id>Q9UQK1</id>
        <label>PPP1R3C</label>
    </interactant>
    <organismsDiffer>false</organismsDiffer>
    <experiments>3</experiments>
</comment>
<comment type="interaction">
    <interactant intactId="EBI-740553">
        <id>P13807</id>
    </interactant>
    <interactant intactId="EBI-473821">
        <id>Q5RL73</id>
        <label>RBM48</label>
    </interactant>
    <organismsDiffer>false</organismsDiffer>
    <experiments>3</experiments>
</comment>
<comment type="interaction">
    <interactant intactId="EBI-740553">
        <id>P13807</id>
    </interactant>
    <interactant intactId="EBI-749336">
        <id>Q8TAD8</id>
        <label>SNIP1</label>
    </interactant>
    <organismsDiffer>false</organismsDiffer>
    <experiments>3</experiments>
</comment>
<comment type="interaction">
    <interactant intactId="EBI-740553">
        <id>P13807</id>
    </interactant>
    <interactant intactId="EBI-741237">
        <id>O60504</id>
        <label>SORBS3</label>
    </interactant>
    <organismsDiffer>false</organismsDiffer>
    <experiments>3</experiments>
</comment>
<comment type="interaction">
    <interactant intactId="EBI-740553">
        <id>P13807</id>
    </interactant>
    <interactant intactId="EBI-11952651">
        <id>Q7Z6R9</id>
        <label>TFAP2D</label>
    </interactant>
    <organismsDiffer>false</organismsDiffer>
    <experiments>3</experiments>
</comment>
<comment type="interaction">
    <interactant intactId="EBI-740553">
        <id>P13807</id>
    </interactant>
    <interactant intactId="EBI-11741437">
        <id>Q08117-2</id>
        <label>TLE5</label>
    </interactant>
    <organismsDiffer>false</organismsDiffer>
    <experiments>5</experiments>
</comment>
<comment type="interaction">
    <interactant intactId="EBI-740553">
        <id>P13807</id>
    </interactant>
    <interactant intactId="EBI-2515625">
        <id>Q86T24</id>
        <label>ZBTB33</label>
    </interactant>
    <organismsDiffer>false</organismsDiffer>
    <experiments>3</experiments>
</comment>
<comment type="interaction">
    <interactant intactId="EBI-740553">
        <id>P13807</id>
    </interactant>
    <interactant intactId="EBI-1640204">
        <id>Q9UDV6</id>
        <label>ZNF212</label>
    </interactant>
    <organismsDiffer>false</organismsDiffer>
    <experiments>3</experiments>
</comment>
<comment type="interaction">
    <interactant intactId="EBI-740553">
        <id>P13807</id>
    </interactant>
    <interactant intactId="EBI-2560158">
        <id>Q5BKZ1</id>
        <label>ZNF326</label>
    </interactant>
    <organismsDiffer>false</organismsDiffer>
    <experiments>3</experiments>
</comment>
<comment type="interaction">
    <interactant intactId="EBI-740553">
        <id>P13807</id>
    </interactant>
    <interactant intactId="EBI-17269964">
        <id>Q6S9Z5</id>
        <label>ZNF474</label>
    </interactant>
    <organismsDiffer>false</organismsDiffer>
    <experiments>3</experiments>
</comment>
<comment type="interaction">
    <interactant intactId="EBI-740553">
        <id>P13807</id>
    </interactant>
    <interactant intactId="EBI-2555731">
        <id>Q9H707</id>
        <label>ZNF552</label>
    </interactant>
    <organismsDiffer>false</organismsDiffer>
    <experiments>3</experiments>
</comment>
<comment type="interaction">
    <interactant intactId="EBI-740553">
        <id>P13807</id>
    </interactant>
    <interactant intactId="EBI-4395669">
        <id>Q6ZNG0</id>
        <label>ZNF620</label>
    </interactant>
    <organismsDiffer>false</organismsDiffer>
    <experiments>3</experiments>
</comment>
<comment type="interaction">
    <interactant intactId="EBI-740553">
        <id>P13807</id>
    </interactant>
    <interactant intactId="EBI-10251462">
        <id>Q6NX45</id>
        <label>ZNF774</label>
    </interactant>
    <organismsDiffer>false</organismsDiffer>
    <experiments>3</experiments>
</comment>
<comment type="alternative products">
    <event type="alternative splicing"/>
    <isoform>
        <id>P13807-1</id>
        <name>1</name>
        <sequence type="displayed"/>
    </isoform>
    <isoform>
        <id>P13807-2</id>
        <name>2</name>
        <sequence type="described" ref="VSP_042745"/>
    </isoform>
</comment>
<comment type="tissue specificity">
    <text evidence="12">Expressed in skeletal muscle and most other cell types where glycogen is present.</text>
</comment>
<comment type="PTM">
    <text evidence="1 13">Phosphorylation at Ser-8 by AMPK inactivates the enzyme activity. Primed phosphorylation at Ser-657 (site 5) by CSNK2A1 and CSNK2A2 is required for inhibitory phosphorylation at Ser-641 (site 3a), Ser-645 (site 3b), Ser-649 (site 3c) and Ser-653 (site 4) by GSK3A an GSK3B (By similarity). Phosphorylated at Ser-641 by DYRK2, leading to inactivation (By similarity). Phosphorylated at Ser-641 by PASK, leading to inactivation; phosphorylation by PASK is inhibited by glycogen. Dephosphorylation at Ser-641 and Ser-645 by PP1 activates the enzyme (PubMed:35835870).</text>
</comment>
<comment type="disease" evidence="6">
    <disease id="DI-02012">
        <name>Muscle glycogen storage disease 0</name>
        <acronym>GSD0b</acronym>
        <description>Metabolic disorder characterized by fasting hypoglycemia presenting in infancy or early childhood. The role of muscle glycogen is to provide critical energy during bursts of activity and sustained muscle work.</description>
        <dbReference type="MIM" id="611556"/>
    </disease>
    <text>The disease is caused by variants affecting the gene represented in this entry.</text>
</comment>
<comment type="similarity">
    <text evidence="11">Belongs to the glycosyltransferase 3 family.</text>
</comment>
<gene>
    <name evidence="14" type="primary">GYS1</name>
    <name type="synonym">GYS</name>
</gene>
<keyword id="KW-0002">3D-structure</keyword>
<keyword id="KW-0021">Allosteric enzyme</keyword>
<keyword id="KW-0025">Alternative splicing</keyword>
<keyword id="KW-0219">Diabetes mellitus</keyword>
<keyword id="KW-0225">Disease variant</keyword>
<keyword id="KW-0320">Glycogen biosynthesis</keyword>
<keyword id="KW-0328">Glycosyltransferase</keyword>
<keyword id="KW-0597">Phosphoprotein</keyword>
<keyword id="KW-1267">Proteomics identification</keyword>
<keyword id="KW-1185">Reference proteome</keyword>
<keyword id="KW-0808">Transferase</keyword>
<sequence>MPLNRTLSMSSLPGLEDWEDEFDLENAVLFEVAWEVANKVGGIYTVLQTKAKVTGDEWGDNYFLVGPYTEQGVRTQVELLEAPTPALKRTLDSMNSKGCKVYFGRWLIEGGPLVVLLDVGASAWALERWKGELWDTCNIGVPWYDREANDAVLFGFLTTWFLGEFLAQSEEKPHVVAHFHEWLAGVGLCLCRARRLPVATIFTTHATLLGRYLCAGAVDFYNNLENFNVDKEAGERQIYHRYCMERAAAHCAHVFTTVSQITAIEAQHLLKRKPDIVTPNGLNVKKFSAMHEFQNLHAQSKARIQEFVRGHFYGHLDFNLDKTLYFFIAGRYEFSNKGADVFLEALARLNYLLRVNGSEQTVVAFFIMPARTNNFNVETLKGQAVRKQLWDTANTVKEKFGRKLYESLLVGSLPDMNKMLDKEDFTMMKRAIFATQRQSFPPVCTHNMLDDSSDPILTTIRRIGLFNSSADRVKVIFHPEFLSSTSPLLPVDYEEFVRGCHLGVFPSYYEPWGYTPAECTVMGIPSISTNLSGFGCFMEEHIADPSAYGIYILDRRFRSLDDSCSQLTSFLYSFCQQSRRQRIIQRNRTERLSDLLDWKYLGRYYMSARHMALSKAFPEHFTYEPNEADAAQGYRYPRPASVPPSPSLSRHSSPHQSEDEEDPRNGPLEEDGERYDEDEEAAKDRRNIRAPEWPRRASCTSSTSGSKRNSVDTATSSSLSTPSEPLSPTSSLGEERN</sequence>